<keyword id="KW-0963">Cytoplasm</keyword>
<keyword id="KW-0378">Hydrolase</keyword>
<keyword id="KW-0694">RNA-binding</keyword>
<keyword id="KW-0820">tRNA-binding</keyword>
<evidence type="ECO:0000255" key="1">
    <source>
        <dbReference type="HAMAP-Rule" id="MF_00518"/>
    </source>
</evidence>
<feature type="chain" id="PRO_1000060905" description="D-aminoacyl-tRNA deacylase">
    <location>
        <begin position="1"/>
        <end position="147"/>
    </location>
</feature>
<feature type="short sequence motif" description="Gly-cisPro motif, important for rejection of L-amino acids" evidence="1">
    <location>
        <begin position="137"/>
        <end position="138"/>
    </location>
</feature>
<dbReference type="EC" id="3.1.1.96" evidence="1"/>
<dbReference type="EMBL" id="CP000813">
    <property type="protein sequence ID" value="ABV63065.1"/>
    <property type="molecule type" value="Genomic_DNA"/>
</dbReference>
<dbReference type="RefSeq" id="WP_003216527.1">
    <property type="nucleotide sequence ID" value="NZ_VEIC01000003.1"/>
</dbReference>
<dbReference type="SMR" id="A8FFP8"/>
<dbReference type="STRING" id="315750.BPUM_2400"/>
<dbReference type="GeneID" id="5621664"/>
<dbReference type="KEGG" id="bpu:BPUM_2400"/>
<dbReference type="eggNOG" id="COG1490">
    <property type="taxonomic scope" value="Bacteria"/>
</dbReference>
<dbReference type="HOGENOM" id="CLU_076901_1_0_9"/>
<dbReference type="OrthoDB" id="9801395at2"/>
<dbReference type="Proteomes" id="UP000001355">
    <property type="component" value="Chromosome"/>
</dbReference>
<dbReference type="GO" id="GO:0005737">
    <property type="term" value="C:cytoplasm"/>
    <property type="evidence" value="ECO:0007669"/>
    <property type="project" value="UniProtKB-SubCell"/>
</dbReference>
<dbReference type="GO" id="GO:0051500">
    <property type="term" value="F:D-tyrosyl-tRNA(Tyr) deacylase activity"/>
    <property type="evidence" value="ECO:0007669"/>
    <property type="project" value="TreeGrafter"/>
</dbReference>
<dbReference type="GO" id="GO:0106026">
    <property type="term" value="F:Gly-tRNA(Ala) deacylase activity"/>
    <property type="evidence" value="ECO:0007669"/>
    <property type="project" value="UniProtKB-UniRule"/>
</dbReference>
<dbReference type="GO" id="GO:0043908">
    <property type="term" value="F:Ser(Gly)-tRNA(Ala) hydrolase activity"/>
    <property type="evidence" value="ECO:0007669"/>
    <property type="project" value="UniProtKB-UniRule"/>
</dbReference>
<dbReference type="GO" id="GO:0000049">
    <property type="term" value="F:tRNA binding"/>
    <property type="evidence" value="ECO:0007669"/>
    <property type="project" value="UniProtKB-UniRule"/>
</dbReference>
<dbReference type="GO" id="GO:0019478">
    <property type="term" value="P:D-amino acid catabolic process"/>
    <property type="evidence" value="ECO:0007669"/>
    <property type="project" value="UniProtKB-UniRule"/>
</dbReference>
<dbReference type="CDD" id="cd00563">
    <property type="entry name" value="Dtyr_deacylase"/>
    <property type="match status" value="1"/>
</dbReference>
<dbReference type="FunFam" id="3.50.80.10:FF:000001">
    <property type="entry name" value="D-aminoacyl-tRNA deacylase"/>
    <property type="match status" value="1"/>
</dbReference>
<dbReference type="Gene3D" id="3.50.80.10">
    <property type="entry name" value="D-tyrosyl-tRNA(Tyr) deacylase"/>
    <property type="match status" value="1"/>
</dbReference>
<dbReference type="HAMAP" id="MF_00518">
    <property type="entry name" value="Deacylase_Dtd"/>
    <property type="match status" value="1"/>
</dbReference>
<dbReference type="InterPro" id="IPR003732">
    <property type="entry name" value="Daa-tRNA_deacyls_DTD"/>
</dbReference>
<dbReference type="InterPro" id="IPR023509">
    <property type="entry name" value="DTD-like_sf"/>
</dbReference>
<dbReference type="NCBIfam" id="TIGR00256">
    <property type="entry name" value="D-aminoacyl-tRNA deacylase"/>
    <property type="match status" value="1"/>
</dbReference>
<dbReference type="PANTHER" id="PTHR10472:SF5">
    <property type="entry name" value="D-AMINOACYL-TRNA DEACYLASE 1"/>
    <property type="match status" value="1"/>
</dbReference>
<dbReference type="PANTHER" id="PTHR10472">
    <property type="entry name" value="D-TYROSYL-TRNA TYR DEACYLASE"/>
    <property type="match status" value="1"/>
</dbReference>
<dbReference type="Pfam" id="PF02580">
    <property type="entry name" value="Tyr_Deacylase"/>
    <property type="match status" value="1"/>
</dbReference>
<dbReference type="SUPFAM" id="SSF69500">
    <property type="entry name" value="DTD-like"/>
    <property type="match status" value="1"/>
</dbReference>
<reference key="1">
    <citation type="journal article" date="2007" name="PLoS ONE">
        <title>Paradoxical DNA repair and peroxide resistance gene conservation in Bacillus pumilus SAFR-032.</title>
        <authorList>
            <person name="Gioia J."/>
            <person name="Yerrapragada S."/>
            <person name="Qin X."/>
            <person name="Jiang H."/>
            <person name="Igboeli O.C."/>
            <person name="Muzny D."/>
            <person name="Dugan-Rocha S."/>
            <person name="Ding Y."/>
            <person name="Hawes A."/>
            <person name="Liu W."/>
            <person name="Perez L."/>
            <person name="Kovar C."/>
            <person name="Dinh H."/>
            <person name="Lee S."/>
            <person name="Nazareth L."/>
            <person name="Blyth P."/>
            <person name="Holder M."/>
            <person name="Buhay C."/>
            <person name="Tirumalai M.R."/>
            <person name="Liu Y."/>
            <person name="Dasgupta I."/>
            <person name="Bokhetache L."/>
            <person name="Fujita M."/>
            <person name="Karouia F."/>
            <person name="Eswara Moorthy P."/>
            <person name="Siefert J."/>
            <person name="Uzman A."/>
            <person name="Buzumbo P."/>
            <person name="Verma A."/>
            <person name="Zwiya H."/>
            <person name="McWilliams B.D."/>
            <person name="Olowu A."/>
            <person name="Clinkenbeard K.D."/>
            <person name="Newcombe D."/>
            <person name="Golebiewski L."/>
            <person name="Petrosino J.F."/>
            <person name="Nicholson W.L."/>
            <person name="Fox G.E."/>
            <person name="Venkateswaran K."/>
            <person name="Highlander S.K."/>
            <person name="Weinstock G.M."/>
        </authorList>
    </citation>
    <scope>NUCLEOTIDE SEQUENCE [LARGE SCALE GENOMIC DNA]</scope>
    <source>
        <strain>SAFR-032</strain>
    </source>
</reference>
<comment type="function">
    <text evidence="1">An aminoacyl-tRNA editing enzyme that deacylates mischarged D-aminoacyl-tRNAs. Also deacylates mischarged glycyl-tRNA(Ala), protecting cells against glycine mischarging by AlaRS. Acts via tRNA-based rather than protein-based catalysis; rejects L-amino acids rather than detecting D-amino acids in the active site. By recycling D-aminoacyl-tRNA to D-amino acids and free tRNA molecules, this enzyme counteracts the toxicity associated with the formation of D-aminoacyl-tRNA entities in vivo and helps enforce protein L-homochirality.</text>
</comment>
<comment type="catalytic activity">
    <reaction evidence="1">
        <text>glycyl-tRNA(Ala) + H2O = tRNA(Ala) + glycine + H(+)</text>
        <dbReference type="Rhea" id="RHEA:53744"/>
        <dbReference type="Rhea" id="RHEA-COMP:9657"/>
        <dbReference type="Rhea" id="RHEA-COMP:13640"/>
        <dbReference type="ChEBI" id="CHEBI:15377"/>
        <dbReference type="ChEBI" id="CHEBI:15378"/>
        <dbReference type="ChEBI" id="CHEBI:57305"/>
        <dbReference type="ChEBI" id="CHEBI:78442"/>
        <dbReference type="ChEBI" id="CHEBI:78522"/>
        <dbReference type="EC" id="3.1.1.96"/>
    </reaction>
</comment>
<comment type="catalytic activity">
    <reaction evidence="1">
        <text>a D-aminoacyl-tRNA + H2O = a tRNA + a D-alpha-amino acid + H(+)</text>
        <dbReference type="Rhea" id="RHEA:13953"/>
        <dbReference type="Rhea" id="RHEA-COMP:10123"/>
        <dbReference type="Rhea" id="RHEA-COMP:10124"/>
        <dbReference type="ChEBI" id="CHEBI:15377"/>
        <dbReference type="ChEBI" id="CHEBI:15378"/>
        <dbReference type="ChEBI" id="CHEBI:59871"/>
        <dbReference type="ChEBI" id="CHEBI:78442"/>
        <dbReference type="ChEBI" id="CHEBI:79333"/>
        <dbReference type="EC" id="3.1.1.96"/>
    </reaction>
</comment>
<comment type="subunit">
    <text evidence="1">Homodimer.</text>
</comment>
<comment type="subcellular location">
    <subcellularLocation>
        <location evidence="1">Cytoplasm</location>
    </subcellularLocation>
</comment>
<comment type="domain">
    <text evidence="1">A Gly-cisPro motif from one monomer fits into the active site of the other monomer to allow specific chiral rejection of L-amino acids.</text>
</comment>
<comment type="similarity">
    <text evidence="1">Belongs to the DTD family.</text>
</comment>
<protein>
    <recommendedName>
        <fullName evidence="1">D-aminoacyl-tRNA deacylase</fullName>
        <shortName evidence="1">DTD</shortName>
        <ecNumber evidence="1">3.1.1.96</ecNumber>
    </recommendedName>
    <alternativeName>
        <fullName evidence="1">Gly-tRNA(Ala) deacylase</fullName>
    </alternativeName>
</protein>
<gene>
    <name evidence="1" type="primary">dtd</name>
    <name type="ordered locus">BPUM_2400</name>
</gene>
<proteinExistence type="inferred from homology"/>
<name>DTD_BACP2</name>
<organism>
    <name type="scientific">Bacillus pumilus (strain SAFR-032)</name>
    <dbReference type="NCBI Taxonomy" id="315750"/>
    <lineage>
        <taxon>Bacteria</taxon>
        <taxon>Bacillati</taxon>
        <taxon>Bacillota</taxon>
        <taxon>Bacilli</taxon>
        <taxon>Bacillales</taxon>
        <taxon>Bacillaceae</taxon>
        <taxon>Bacillus</taxon>
    </lineage>
</organism>
<accession>A8FFP8</accession>
<sequence>MRLVVQRVTSASVKVEEEITGAINEGYMVLVGVTHEDTEEDVHYLADKLAHLRIFEDENGKMNHSLLDVKGSVLSVSQFTLYGDTRKGRRPNFMKAAKPDAANALYECFNKALREKGIHVETGRFGAMMDVSLTNSGPVTIWMDSKE</sequence>